<reference key="1">
    <citation type="journal article" date="2009" name="PLoS Pathog.">
        <title>Genomic evidence for the evolution of Streptococcus equi: host restriction, increased virulence, and genetic exchange with human pathogens.</title>
        <authorList>
            <person name="Holden M.T.G."/>
            <person name="Heather Z."/>
            <person name="Paillot R."/>
            <person name="Steward K.F."/>
            <person name="Webb K."/>
            <person name="Ainslie F."/>
            <person name="Jourdan T."/>
            <person name="Bason N.C."/>
            <person name="Holroyd N.E."/>
            <person name="Mungall K."/>
            <person name="Quail M.A."/>
            <person name="Sanders M."/>
            <person name="Simmonds M."/>
            <person name="Willey D."/>
            <person name="Brooks K."/>
            <person name="Aanensen D.M."/>
            <person name="Spratt B.G."/>
            <person name="Jolley K.A."/>
            <person name="Maiden M.C.J."/>
            <person name="Kehoe M."/>
            <person name="Chanter N."/>
            <person name="Bentley S.D."/>
            <person name="Robinson C."/>
            <person name="Maskell D.J."/>
            <person name="Parkhill J."/>
            <person name="Waller A.S."/>
        </authorList>
    </citation>
    <scope>NUCLEOTIDE SEQUENCE [LARGE SCALE GENOMIC DNA]</scope>
    <source>
        <strain>H70</strain>
    </source>
</reference>
<evidence type="ECO:0000255" key="1">
    <source>
        <dbReference type="HAMAP-Rule" id="MF_00021"/>
    </source>
</evidence>
<accession>C0MGK8</accession>
<protein>
    <recommendedName>
        <fullName evidence="1">Probable tRNA sulfurtransferase</fullName>
        <ecNumber evidence="1">2.8.1.4</ecNumber>
    </recommendedName>
    <alternativeName>
        <fullName evidence="1">Sulfur carrier protein ThiS sulfurtransferase</fullName>
    </alternativeName>
    <alternativeName>
        <fullName evidence="1">Thiamine biosynthesis protein ThiI</fullName>
    </alternativeName>
    <alternativeName>
        <fullName evidence="1">tRNA 4-thiouridine synthase</fullName>
    </alternativeName>
</protein>
<gene>
    <name evidence="1" type="primary">thiI</name>
    <name type="ordered locus">SZO_10920</name>
</gene>
<organism>
    <name type="scientific">Streptococcus equi subsp. zooepidemicus (strain H70)</name>
    <dbReference type="NCBI Taxonomy" id="553483"/>
    <lineage>
        <taxon>Bacteria</taxon>
        <taxon>Bacillati</taxon>
        <taxon>Bacillota</taxon>
        <taxon>Bacilli</taxon>
        <taxon>Lactobacillales</taxon>
        <taxon>Streptococcaceae</taxon>
        <taxon>Streptococcus</taxon>
    </lineage>
</organism>
<comment type="function">
    <text evidence="1">Catalyzes the ATP-dependent transfer of a sulfur to tRNA to produce 4-thiouridine in position 8 of tRNAs, which functions as a near-UV photosensor. Also catalyzes the transfer of sulfur to the sulfur carrier protein ThiS, forming ThiS-thiocarboxylate. This is a step in the synthesis of thiazole, in the thiamine biosynthesis pathway. The sulfur is donated as persulfide by IscS.</text>
</comment>
<comment type="catalytic activity">
    <reaction evidence="1">
        <text>[ThiI sulfur-carrier protein]-S-sulfanyl-L-cysteine + a uridine in tRNA + 2 reduced [2Fe-2S]-[ferredoxin] + ATP + H(+) = [ThiI sulfur-carrier protein]-L-cysteine + a 4-thiouridine in tRNA + 2 oxidized [2Fe-2S]-[ferredoxin] + AMP + diphosphate</text>
        <dbReference type="Rhea" id="RHEA:24176"/>
        <dbReference type="Rhea" id="RHEA-COMP:10000"/>
        <dbReference type="Rhea" id="RHEA-COMP:10001"/>
        <dbReference type="Rhea" id="RHEA-COMP:13337"/>
        <dbReference type="Rhea" id="RHEA-COMP:13338"/>
        <dbReference type="Rhea" id="RHEA-COMP:13339"/>
        <dbReference type="Rhea" id="RHEA-COMP:13340"/>
        <dbReference type="ChEBI" id="CHEBI:15378"/>
        <dbReference type="ChEBI" id="CHEBI:29950"/>
        <dbReference type="ChEBI" id="CHEBI:30616"/>
        <dbReference type="ChEBI" id="CHEBI:33019"/>
        <dbReference type="ChEBI" id="CHEBI:33737"/>
        <dbReference type="ChEBI" id="CHEBI:33738"/>
        <dbReference type="ChEBI" id="CHEBI:61963"/>
        <dbReference type="ChEBI" id="CHEBI:65315"/>
        <dbReference type="ChEBI" id="CHEBI:136798"/>
        <dbReference type="ChEBI" id="CHEBI:456215"/>
        <dbReference type="EC" id="2.8.1.4"/>
    </reaction>
</comment>
<comment type="catalytic activity">
    <reaction evidence="1">
        <text>[ThiS sulfur-carrier protein]-C-terminal Gly-Gly-AMP + S-sulfanyl-L-cysteinyl-[cysteine desulfurase] + AH2 = [ThiS sulfur-carrier protein]-C-terminal-Gly-aminoethanethioate + L-cysteinyl-[cysteine desulfurase] + A + AMP + 2 H(+)</text>
        <dbReference type="Rhea" id="RHEA:43340"/>
        <dbReference type="Rhea" id="RHEA-COMP:12157"/>
        <dbReference type="Rhea" id="RHEA-COMP:12158"/>
        <dbReference type="Rhea" id="RHEA-COMP:12910"/>
        <dbReference type="Rhea" id="RHEA-COMP:19908"/>
        <dbReference type="ChEBI" id="CHEBI:13193"/>
        <dbReference type="ChEBI" id="CHEBI:15378"/>
        <dbReference type="ChEBI" id="CHEBI:17499"/>
        <dbReference type="ChEBI" id="CHEBI:29950"/>
        <dbReference type="ChEBI" id="CHEBI:61963"/>
        <dbReference type="ChEBI" id="CHEBI:90618"/>
        <dbReference type="ChEBI" id="CHEBI:232372"/>
        <dbReference type="ChEBI" id="CHEBI:456215"/>
    </reaction>
</comment>
<comment type="pathway">
    <text evidence="1">Cofactor biosynthesis; thiamine diphosphate biosynthesis.</text>
</comment>
<comment type="subcellular location">
    <subcellularLocation>
        <location evidence="1">Cytoplasm</location>
    </subcellularLocation>
</comment>
<comment type="similarity">
    <text evidence="1">Belongs to the ThiI family.</text>
</comment>
<feature type="chain" id="PRO_1000201919" description="Probable tRNA sulfurtransferase">
    <location>
        <begin position="1"/>
        <end position="404"/>
    </location>
</feature>
<feature type="domain" description="THUMP" evidence="1">
    <location>
        <begin position="60"/>
        <end position="165"/>
    </location>
</feature>
<feature type="binding site" evidence="1">
    <location>
        <begin position="183"/>
        <end position="184"/>
    </location>
    <ligand>
        <name>ATP</name>
        <dbReference type="ChEBI" id="CHEBI:30616"/>
    </ligand>
</feature>
<feature type="binding site" evidence="1">
    <location>
        <begin position="208"/>
        <end position="209"/>
    </location>
    <ligand>
        <name>ATP</name>
        <dbReference type="ChEBI" id="CHEBI:30616"/>
    </ligand>
</feature>
<feature type="binding site" evidence="1">
    <location>
        <position position="265"/>
    </location>
    <ligand>
        <name>ATP</name>
        <dbReference type="ChEBI" id="CHEBI:30616"/>
    </ligand>
</feature>
<feature type="binding site" evidence="1">
    <location>
        <position position="287"/>
    </location>
    <ligand>
        <name>ATP</name>
        <dbReference type="ChEBI" id="CHEBI:30616"/>
    </ligand>
</feature>
<feature type="binding site" evidence="1">
    <location>
        <position position="296"/>
    </location>
    <ligand>
        <name>ATP</name>
        <dbReference type="ChEBI" id="CHEBI:30616"/>
    </ligand>
</feature>
<keyword id="KW-0067">ATP-binding</keyword>
<keyword id="KW-0963">Cytoplasm</keyword>
<keyword id="KW-0547">Nucleotide-binding</keyword>
<keyword id="KW-0694">RNA-binding</keyword>
<keyword id="KW-0784">Thiamine biosynthesis</keyword>
<keyword id="KW-0808">Transferase</keyword>
<keyword id="KW-0820">tRNA-binding</keyword>
<proteinExistence type="inferred from homology"/>
<name>THII_STRS7</name>
<dbReference type="EC" id="2.8.1.4" evidence="1"/>
<dbReference type="EMBL" id="FM204884">
    <property type="protein sequence ID" value="CAW99481.1"/>
    <property type="molecule type" value="Genomic_DNA"/>
</dbReference>
<dbReference type="SMR" id="C0MGK8"/>
<dbReference type="KEGG" id="seq:SZO_10920"/>
<dbReference type="eggNOG" id="COG0301">
    <property type="taxonomic scope" value="Bacteria"/>
</dbReference>
<dbReference type="HOGENOM" id="CLU_037952_4_0_9"/>
<dbReference type="UniPathway" id="UPA00060"/>
<dbReference type="Proteomes" id="UP000001368">
    <property type="component" value="Chromosome"/>
</dbReference>
<dbReference type="GO" id="GO:0005829">
    <property type="term" value="C:cytosol"/>
    <property type="evidence" value="ECO:0007669"/>
    <property type="project" value="TreeGrafter"/>
</dbReference>
<dbReference type="GO" id="GO:0005524">
    <property type="term" value="F:ATP binding"/>
    <property type="evidence" value="ECO:0007669"/>
    <property type="project" value="UniProtKB-UniRule"/>
</dbReference>
<dbReference type="GO" id="GO:0004810">
    <property type="term" value="F:CCA tRNA nucleotidyltransferase activity"/>
    <property type="evidence" value="ECO:0007669"/>
    <property type="project" value="InterPro"/>
</dbReference>
<dbReference type="GO" id="GO:0000049">
    <property type="term" value="F:tRNA binding"/>
    <property type="evidence" value="ECO:0007669"/>
    <property type="project" value="UniProtKB-UniRule"/>
</dbReference>
<dbReference type="GO" id="GO:0140741">
    <property type="term" value="F:tRNA-uracil-4 sulfurtransferase activity"/>
    <property type="evidence" value="ECO:0007669"/>
    <property type="project" value="UniProtKB-EC"/>
</dbReference>
<dbReference type="GO" id="GO:0009228">
    <property type="term" value="P:thiamine biosynthetic process"/>
    <property type="evidence" value="ECO:0007669"/>
    <property type="project" value="UniProtKB-KW"/>
</dbReference>
<dbReference type="GO" id="GO:0009229">
    <property type="term" value="P:thiamine diphosphate biosynthetic process"/>
    <property type="evidence" value="ECO:0007669"/>
    <property type="project" value="UniProtKB-UniRule"/>
</dbReference>
<dbReference type="GO" id="GO:0052837">
    <property type="term" value="P:thiazole biosynthetic process"/>
    <property type="evidence" value="ECO:0007669"/>
    <property type="project" value="TreeGrafter"/>
</dbReference>
<dbReference type="GO" id="GO:0002937">
    <property type="term" value="P:tRNA 4-thiouridine biosynthesis"/>
    <property type="evidence" value="ECO:0007669"/>
    <property type="project" value="TreeGrafter"/>
</dbReference>
<dbReference type="CDD" id="cd01712">
    <property type="entry name" value="PPase_ThiI"/>
    <property type="match status" value="1"/>
</dbReference>
<dbReference type="CDD" id="cd11716">
    <property type="entry name" value="THUMP_ThiI"/>
    <property type="match status" value="1"/>
</dbReference>
<dbReference type="FunFam" id="3.40.50.620:FF:000053">
    <property type="entry name" value="Probable tRNA sulfurtransferase"/>
    <property type="match status" value="1"/>
</dbReference>
<dbReference type="Gene3D" id="3.30.2130.30">
    <property type="match status" value="1"/>
</dbReference>
<dbReference type="Gene3D" id="3.40.50.620">
    <property type="entry name" value="HUPs"/>
    <property type="match status" value="1"/>
</dbReference>
<dbReference type="HAMAP" id="MF_00021">
    <property type="entry name" value="ThiI"/>
    <property type="match status" value="1"/>
</dbReference>
<dbReference type="InterPro" id="IPR014729">
    <property type="entry name" value="Rossmann-like_a/b/a_fold"/>
</dbReference>
<dbReference type="InterPro" id="IPR020536">
    <property type="entry name" value="ThiI_AANH"/>
</dbReference>
<dbReference type="InterPro" id="IPR054173">
    <property type="entry name" value="ThiI_fer"/>
</dbReference>
<dbReference type="InterPro" id="IPR049961">
    <property type="entry name" value="ThiI_N"/>
</dbReference>
<dbReference type="InterPro" id="IPR004114">
    <property type="entry name" value="THUMP_dom"/>
</dbReference>
<dbReference type="InterPro" id="IPR049962">
    <property type="entry name" value="THUMP_ThiI"/>
</dbReference>
<dbReference type="InterPro" id="IPR003720">
    <property type="entry name" value="tRNA_STrfase"/>
</dbReference>
<dbReference type="InterPro" id="IPR050102">
    <property type="entry name" value="tRNA_sulfurtransferase_ThiI"/>
</dbReference>
<dbReference type="NCBIfam" id="TIGR00342">
    <property type="entry name" value="tRNA uracil 4-sulfurtransferase ThiI"/>
    <property type="match status" value="1"/>
</dbReference>
<dbReference type="PANTHER" id="PTHR43209">
    <property type="entry name" value="TRNA SULFURTRANSFERASE"/>
    <property type="match status" value="1"/>
</dbReference>
<dbReference type="PANTHER" id="PTHR43209:SF1">
    <property type="entry name" value="TRNA SULFURTRANSFERASE"/>
    <property type="match status" value="1"/>
</dbReference>
<dbReference type="Pfam" id="PF02568">
    <property type="entry name" value="ThiI"/>
    <property type="match status" value="1"/>
</dbReference>
<dbReference type="Pfam" id="PF22025">
    <property type="entry name" value="ThiI_fer"/>
    <property type="match status" value="1"/>
</dbReference>
<dbReference type="Pfam" id="PF02926">
    <property type="entry name" value="THUMP"/>
    <property type="match status" value="1"/>
</dbReference>
<dbReference type="SMART" id="SM00981">
    <property type="entry name" value="THUMP"/>
    <property type="match status" value="1"/>
</dbReference>
<dbReference type="SUPFAM" id="SSF52402">
    <property type="entry name" value="Adenine nucleotide alpha hydrolases-like"/>
    <property type="match status" value="1"/>
</dbReference>
<dbReference type="SUPFAM" id="SSF143437">
    <property type="entry name" value="THUMP domain-like"/>
    <property type="match status" value="1"/>
</dbReference>
<dbReference type="PROSITE" id="PS51165">
    <property type="entry name" value="THUMP"/>
    <property type="match status" value="1"/>
</dbReference>
<sequence>MKYSEIMVRHGELSTKGKNRMRFINRLKANIQDVLSAYPEVTVRSTRDRTHVLLNGADDRSVIEALKPVFGIQGLSPVYKVEKSVPVLIAAVQEIMSSLYREGLTFKISSKRSDHQFELDSRDLNHTLGAAVFEALPHIKAQMKNPDVTLKVEIRDEAAYLSHEDIKGAGGLPVGASGKGMLMLSGGIDSPVAGYLSLKRGVEIEAVHFASPPYTSPGALRKAKDLTQRLTRFGGNIQFIEVPFTEIQEEIKHKAPEAYLMTLTRRFMLRITDAIREKRKALVIINGESLGQVASQTLESMQAINAVTSTPIIRPVVAMDKLEIIDIAQQIDTFDISIQPFEDCCTIFAPDRPKTNPKLANVERYESRFDVDGLVERAVAGIRVTEITPEIETDSLSTLIEELL</sequence>